<dbReference type="EC" id="1.2.1.12" evidence="1"/>
<dbReference type="EMBL" id="CP001560">
    <property type="protein sequence ID" value="AFJ47443.1"/>
    <property type="molecule type" value="Genomic_DNA"/>
</dbReference>
<dbReference type="EMBL" id="M63358">
    <property type="protein sequence ID" value="AAA23837.1"/>
    <property type="molecule type" value="Genomic_DNA"/>
</dbReference>
<dbReference type="PIR" id="I41220">
    <property type="entry name" value="I41220"/>
</dbReference>
<dbReference type="RefSeq" id="WP_002440306.1">
    <property type="nucleotide sequence ID" value="NC_017910.1"/>
</dbReference>
<dbReference type="SMR" id="I2BA89"/>
<dbReference type="STRING" id="630626.EBL_c23540"/>
<dbReference type="KEGG" id="ebt:EBL_c23540"/>
<dbReference type="PATRIC" id="fig|630626.3.peg.2276"/>
<dbReference type="eggNOG" id="COG0057">
    <property type="taxonomic scope" value="Bacteria"/>
</dbReference>
<dbReference type="HOGENOM" id="CLU_030140_0_3_6"/>
<dbReference type="OrthoDB" id="9803304at2"/>
<dbReference type="UniPathway" id="UPA00109">
    <property type="reaction ID" value="UER00184"/>
</dbReference>
<dbReference type="Proteomes" id="UP000001955">
    <property type="component" value="Chromosome"/>
</dbReference>
<dbReference type="GO" id="GO:0005737">
    <property type="term" value="C:cytoplasm"/>
    <property type="evidence" value="ECO:0007669"/>
    <property type="project" value="UniProtKB-SubCell"/>
</dbReference>
<dbReference type="GO" id="GO:0004365">
    <property type="term" value="F:glyceraldehyde-3-phosphate dehydrogenase (NAD+) (phosphorylating) activity"/>
    <property type="evidence" value="ECO:0000250"/>
    <property type="project" value="UniProtKB"/>
</dbReference>
<dbReference type="GO" id="GO:0051287">
    <property type="term" value="F:NAD binding"/>
    <property type="evidence" value="ECO:0000250"/>
    <property type="project" value="UniProtKB"/>
</dbReference>
<dbReference type="GO" id="GO:0050661">
    <property type="term" value="F:NADP binding"/>
    <property type="evidence" value="ECO:0007669"/>
    <property type="project" value="InterPro"/>
</dbReference>
<dbReference type="GO" id="GO:0006006">
    <property type="term" value="P:glucose metabolic process"/>
    <property type="evidence" value="ECO:0007669"/>
    <property type="project" value="InterPro"/>
</dbReference>
<dbReference type="GO" id="GO:0006096">
    <property type="term" value="P:glycolytic process"/>
    <property type="evidence" value="ECO:0007669"/>
    <property type="project" value="UniProtKB-UniPathway"/>
</dbReference>
<dbReference type="CDD" id="cd18126">
    <property type="entry name" value="GAPDH_I_C"/>
    <property type="match status" value="1"/>
</dbReference>
<dbReference type="CDD" id="cd05214">
    <property type="entry name" value="GAPDH_I_N"/>
    <property type="match status" value="1"/>
</dbReference>
<dbReference type="FunFam" id="3.30.360.10:FF:000001">
    <property type="entry name" value="Glyceraldehyde-3-phosphate dehydrogenase"/>
    <property type="match status" value="1"/>
</dbReference>
<dbReference type="FunFam" id="3.40.50.720:FF:000001">
    <property type="entry name" value="Glyceraldehyde-3-phosphate dehydrogenase"/>
    <property type="match status" value="1"/>
</dbReference>
<dbReference type="Gene3D" id="3.30.360.10">
    <property type="entry name" value="Dihydrodipicolinate Reductase, domain 2"/>
    <property type="match status" value="1"/>
</dbReference>
<dbReference type="Gene3D" id="3.40.50.720">
    <property type="entry name" value="NAD(P)-binding Rossmann-like Domain"/>
    <property type="match status" value="1"/>
</dbReference>
<dbReference type="InterPro" id="IPR020831">
    <property type="entry name" value="GlycerAld/Erythrose_P_DH"/>
</dbReference>
<dbReference type="InterPro" id="IPR020830">
    <property type="entry name" value="GlycerAld_3-P_DH_AS"/>
</dbReference>
<dbReference type="InterPro" id="IPR020829">
    <property type="entry name" value="GlycerAld_3-P_DH_cat"/>
</dbReference>
<dbReference type="InterPro" id="IPR020828">
    <property type="entry name" value="GlycerAld_3-P_DH_NAD(P)-bd"/>
</dbReference>
<dbReference type="InterPro" id="IPR006424">
    <property type="entry name" value="Glyceraldehyde-3-P_DH_1"/>
</dbReference>
<dbReference type="InterPro" id="IPR036291">
    <property type="entry name" value="NAD(P)-bd_dom_sf"/>
</dbReference>
<dbReference type="NCBIfam" id="TIGR01534">
    <property type="entry name" value="GAPDH-I"/>
    <property type="match status" value="1"/>
</dbReference>
<dbReference type="NCBIfam" id="NF011954">
    <property type="entry name" value="PRK15425.1"/>
    <property type="match status" value="1"/>
</dbReference>
<dbReference type="PANTHER" id="PTHR10836">
    <property type="entry name" value="GLYCERALDEHYDE 3-PHOSPHATE DEHYDROGENASE"/>
    <property type="match status" value="1"/>
</dbReference>
<dbReference type="PANTHER" id="PTHR10836:SF76">
    <property type="entry name" value="GLYCERALDEHYDE-3-PHOSPHATE DEHYDROGENASE-RELATED"/>
    <property type="match status" value="1"/>
</dbReference>
<dbReference type="Pfam" id="PF02800">
    <property type="entry name" value="Gp_dh_C"/>
    <property type="match status" value="1"/>
</dbReference>
<dbReference type="Pfam" id="PF00044">
    <property type="entry name" value="Gp_dh_N"/>
    <property type="match status" value="1"/>
</dbReference>
<dbReference type="PIRSF" id="PIRSF000149">
    <property type="entry name" value="GAP_DH"/>
    <property type="match status" value="1"/>
</dbReference>
<dbReference type="PRINTS" id="PR00078">
    <property type="entry name" value="G3PDHDRGNASE"/>
</dbReference>
<dbReference type="SMART" id="SM00846">
    <property type="entry name" value="Gp_dh_N"/>
    <property type="match status" value="1"/>
</dbReference>
<dbReference type="SUPFAM" id="SSF55347">
    <property type="entry name" value="Glyceraldehyde-3-phosphate dehydrogenase-like, C-terminal domain"/>
    <property type="match status" value="1"/>
</dbReference>
<dbReference type="SUPFAM" id="SSF51735">
    <property type="entry name" value="NAD(P)-binding Rossmann-fold domains"/>
    <property type="match status" value="1"/>
</dbReference>
<dbReference type="PROSITE" id="PS00071">
    <property type="entry name" value="GAPDH"/>
    <property type="match status" value="1"/>
</dbReference>
<gene>
    <name type="primary">gapA</name>
    <name type="synonym">gap</name>
    <name type="ordered locus">EBL_c23540</name>
</gene>
<accession>I2BA89</accession>
<accession>P24749</accession>
<comment type="function">
    <text evidence="1">Catalyzes the oxidative phosphorylation of glyceraldehyde 3-phosphate (G3P) to 1,3-bisphosphoglycerate (BPG) using the cofactor NAD. The first reaction step involves the formation of a hemiacetal intermediate between G3P and a cysteine residue, and this hemiacetal intermediate is then oxidized to a thioester, with concomitant reduction of NAD to NADH. The reduced NADH is then exchanged with the second NAD, and the thioester is attacked by a nucleophilic inorganic phosphate to produce BPG.</text>
</comment>
<comment type="catalytic activity">
    <reaction evidence="1">
        <text>D-glyceraldehyde 3-phosphate + phosphate + NAD(+) = (2R)-3-phospho-glyceroyl phosphate + NADH + H(+)</text>
        <dbReference type="Rhea" id="RHEA:10300"/>
        <dbReference type="ChEBI" id="CHEBI:15378"/>
        <dbReference type="ChEBI" id="CHEBI:43474"/>
        <dbReference type="ChEBI" id="CHEBI:57540"/>
        <dbReference type="ChEBI" id="CHEBI:57604"/>
        <dbReference type="ChEBI" id="CHEBI:57945"/>
        <dbReference type="ChEBI" id="CHEBI:59776"/>
        <dbReference type="EC" id="1.2.1.12"/>
    </reaction>
</comment>
<comment type="pathway">
    <text evidence="2">Carbohydrate degradation; glycolysis; pyruvate from D-glyceraldehyde 3-phosphate: step 1/5.</text>
</comment>
<comment type="subunit">
    <text evidence="1">Homotetramer.</text>
</comment>
<comment type="subcellular location">
    <subcellularLocation>
        <location evidence="2">Cytoplasm</location>
    </subcellularLocation>
</comment>
<comment type="similarity">
    <text evidence="2">Belongs to the glyceraldehyde-3-phosphate dehydrogenase family.</text>
</comment>
<proteinExistence type="inferred from homology"/>
<feature type="chain" id="PRO_0000418985" description="Glyceraldehyde-3-phosphate dehydrogenase">
    <location>
        <begin position="1"/>
        <end position="331"/>
    </location>
</feature>
<feature type="active site" description="Nucleophile" evidence="1">
    <location>
        <position position="150"/>
    </location>
</feature>
<feature type="binding site" evidence="1">
    <location>
        <begin position="12"/>
        <end position="13"/>
    </location>
    <ligand>
        <name>NAD(+)</name>
        <dbReference type="ChEBI" id="CHEBI:57540"/>
    </ligand>
</feature>
<feature type="binding site" evidence="1">
    <location>
        <position position="34"/>
    </location>
    <ligand>
        <name>NAD(+)</name>
        <dbReference type="ChEBI" id="CHEBI:57540"/>
    </ligand>
</feature>
<feature type="binding site" evidence="1">
    <location>
        <position position="78"/>
    </location>
    <ligand>
        <name>NAD(+)</name>
        <dbReference type="ChEBI" id="CHEBI:57540"/>
    </ligand>
</feature>
<feature type="binding site" evidence="1">
    <location>
        <position position="120"/>
    </location>
    <ligand>
        <name>NAD(+)</name>
        <dbReference type="ChEBI" id="CHEBI:57540"/>
    </ligand>
</feature>
<feature type="binding site" evidence="1">
    <location>
        <begin position="149"/>
        <end position="151"/>
    </location>
    <ligand>
        <name>D-glyceraldehyde 3-phosphate</name>
        <dbReference type="ChEBI" id="CHEBI:59776"/>
    </ligand>
</feature>
<feature type="binding site" evidence="1">
    <location>
        <position position="180"/>
    </location>
    <ligand>
        <name>D-glyceraldehyde 3-phosphate</name>
        <dbReference type="ChEBI" id="CHEBI:59776"/>
    </ligand>
</feature>
<feature type="binding site" evidence="1">
    <location>
        <begin position="209"/>
        <end position="210"/>
    </location>
    <ligand>
        <name>D-glyceraldehyde 3-phosphate</name>
        <dbReference type="ChEBI" id="CHEBI:59776"/>
    </ligand>
</feature>
<feature type="binding site" evidence="1">
    <location>
        <position position="232"/>
    </location>
    <ligand>
        <name>D-glyceraldehyde 3-phosphate</name>
        <dbReference type="ChEBI" id="CHEBI:59776"/>
    </ligand>
</feature>
<feature type="binding site" evidence="1">
    <location>
        <position position="314"/>
    </location>
    <ligand>
        <name>NAD(+)</name>
        <dbReference type="ChEBI" id="CHEBI:57540"/>
    </ligand>
</feature>
<feature type="site" description="Activates thiol group during catalysis" evidence="1">
    <location>
        <position position="177"/>
    </location>
</feature>
<organism>
    <name type="scientific">Shimwellia blattae (strain ATCC 29907 / DSM 4481 / JCM 1650 / NBRC 105725 / CDC 9005-74)</name>
    <name type="common">Escherichia blattae</name>
    <dbReference type="NCBI Taxonomy" id="630626"/>
    <lineage>
        <taxon>Bacteria</taxon>
        <taxon>Pseudomonadati</taxon>
        <taxon>Pseudomonadota</taxon>
        <taxon>Gammaproteobacteria</taxon>
        <taxon>Enterobacterales</taxon>
        <taxon>Enterobacteriaceae</taxon>
        <taxon>Shimwellia</taxon>
    </lineage>
</organism>
<reference key="1">
    <citation type="journal article" date="2012" name="J. Bacteriol.">
        <title>Complete genome sequence of the B12-producing Shimwellia blattae strain DSM 4481, isolated from a cockroach.</title>
        <authorList>
            <person name="Brzuszkiewicz E."/>
            <person name="Waschkowitz T."/>
            <person name="Wiezer A."/>
            <person name="Daniel R."/>
        </authorList>
    </citation>
    <scope>NUCLEOTIDE SEQUENCE [LARGE SCALE GENOMIC DNA]</scope>
    <source>
        <strain>ATCC 29907 / DSM 4481 / JCM 1650 / NBRC 105725 / CDC 9005-74</strain>
    </source>
</reference>
<reference key="2">
    <citation type="journal article" date="1991" name="J. Gen. Microbiol.">
        <title>Molecular and evolutionary relationships among enteric bacteria.</title>
        <authorList>
            <person name="Lawrence J.G."/>
            <person name="Ochman H."/>
            <person name="Hartl D.L."/>
        </authorList>
    </citation>
    <scope>NUCLEOTIDE SEQUENCE [GENOMIC DNA] OF 16-309</scope>
    <source>
        <strain>ATCC 29907 / DSM 4481 / JCM 1650 / NBRC 105725 / CDC 9005-74</strain>
    </source>
</reference>
<sequence>MTIKVGINGFGRIGRIVFRAAQERSDIEIVAINDLLDAEYMAYMLKYDSTHGRFNGTVEVKDGHLIVNGKKIRVTAERDPANLKWNEAGVEVVAEATGLFLTDETARKHITAGAKKVVMTGPSKDSTPMFVRGANFDTYAGQDIVSNASCTTNCLAPLAKVVNDNFGIVEALMTTVHATTATQKTVDGPSHKDWRGGRGASQNIIPSSTGAAKAVGKVLPELNGKLTGMAFRVPTPNVSVVDLTVRLAKPATYEEIKKAMKAASEGAMKGVLGYTEDDVVSTDFNGETCTSVFDAKAGIALNDNFVKLVSWYDNETGYSHKVLDLIAHISK</sequence>
<name>G3P_SHIBC</name>
<keyword id="KW-0963">Cytoplasm</keyword>
<keyword id="KW-0324">Glycolysis</keyword>
<keyword id="KW-0520">NAD</keyword>
<keyword id="KW-0547">Nucleotide-binding</keyword>
<keyword id="KW-0560">Oxidoreductase</keyword>
<keyword id="KW-1185">Reference proteome</keyword>
<protein>
    <recommendedName>
        <fullName evidence="1">Glyceraldehyde-3-phosphate dehydrogenase</fullName>
        <shortName evidence="1">GAPDH</shortName>
        <ecNumber evidence="1">1.2.1.12</ecNumber>
    </recommendedName>
    <alternativeName>
        <fullName evidence="1">NAD-dependent glyceraldehyde-3-phosphate dehydrogenase</fullName>
    </alternativeName>
</protein>
<evidence type="ECO:0000250" key="1">
    <source>
        <dbReference type="UniProtKB" id="P0A9B2"/>
    </source>
</evidence>
<evidence type="ECO:0000305" key="2"/>